<dbReference type="EC" id="6.3.2.9" evidence="1"/>
<dbReference type="EMBL" id="CP000673">
    <property type="protein sequence ID" value="EDK32244.1"/>
    <property type="molecule type" value="Genomic_DNA"/>
</dbReference>
<dbReference type="RefSeq" id="WP_011988770.1">
    <property type="nucleotide sequence ID" value="NC_009706.1"/>
</dbReference>
<dbReference type="SMR" id="A5N4L3"/>
<dbReference type="STRING" id="431943.CKL_0181"/>
<dbReference type="KEGG" id="ckl:CKL_0181"/>
<dbReference type="eggNOG" id="COG0771">
    <property type="taxonomic scope" value="Bacteria"/>
</dbReference>
<dbReference type="HOGENOM" id="CLU_032540_0_1_9"/>
<dbReference type="UniPathway" id="UPA00219"/>
<dbReference type="Proteomes" id="UP000002411">
    <property type="component" value="Chromosome"/>
</dbReference>
<dbReference type="GO" id="GO:0005737">
    <property type="term" value="C:cytoplasm"/>
    <property type="evidence" value="ECO:0007669"/>
    <property type="project" value="UniProtKB-SubCell"/>
</dbReference>
<dbReference type="GO" id="GO:0005524">
    <property type="term" value="F:ATP binding"/>
    <property type="evidence" value="ECO:0007669"/>
    <property type="project" value="UniProtKB-UniRule"/>
</dbReference>
<dbReference type="GO" id="GO:0008764">
    <property type="term" value="F:UDP-N-acetylmuramoylalanine-D-glutamate ligase activity"/>
    <property type="evidence" value="ECO:0007669"/>
    <property type="project" value="UniProtKB-UniRule"/>
</dbReference>
<dbReference type="GO" id="GO:0051301">
    <property type="term" value="P:cell division"/>
    <property type="evidence" value="ECO:0007669"/>
    <property type="project" value="UniProtKB-KW"/>
</dbReference>
<dbReference type="GO" id="GO:0071555">
    <property type="term" value="P:cell wall organization"/>
    <property type="evidence" value="ECO:0007669"/>
    <property type="project" value="UniProtKB-KW"/>
</dbReference>
<dbReference type="GO" id="GO:0009252">
    <property type="term" value="P:peptidoglycan biosynthetic process"/>
    <property type="evidence" value="ECO:0007669"/>
    <property type="project" value="UniProtKB-UniRule"/>
</dbReference>
<dbReference type="GO" id="GO:0008360">
    <property type="term" value="P:regulation of cell shape"/>
    <property type="evidence" value="ECO:0007669"/>
    <property type="project" value="UniProtKB-KW"/>
</dbReference>
<dbReference type="Gene3D" id="3.90.190.20">
    <property type="entry name" value="Mur ligase, C-terminal domain"/>
    <property type="match status" value="1"/>
</dbReference>
<dbReference type="Gene3D" id="3.40.1190.10">
    <property type="entry name" value="Mur-like, catalytic domain"/>
    <property type="match status" value="1"/>
</dbReference>
<dbReference type="Gene3D" id="3.40.50.720">
    <property type="entry name" value="NAD(P)-binding Rossmann-like Domain"/>
    <property type="match status" value="1"/>
</dbReference>
<dbReference type="HAMAP" id="MF_00639">
    <property type="entry name" value="MurD"/>
    <property type="match status" value="1"/>
</dbReference>
<dbReference type="InterPro" id="IPR036565">
    <property type="entry name" value="Mur-like_cat_sf"/>
</dbReference>
<dbReference type="InterPro" id="IPR004101">
    <property type="entry name" value="Mur_ligase_C"/>
</dbReference>
<dbReference type="InterPro" id="IPR036615">
    <property type="entry name" value="Mur_ligase_C_dom_sf"/>
</dbReference>
<dbReference type="InterPro" id="IPR013221">
    <property type="entry name" value="Mur_ligase_cen"/>
</dbReference>
<dbReference type="InterPro" id="IPR005762">
    <property type="entry name" value="MurD"/>
</dbReference>
<dbReference type="NCBIfam" id="TIGR01087">
    <property type="entry name" value="murD"/>
    <property type="match status" value="1"/>
</dbReference>
<dbReference type="PANTHER" id="PTHR43692">
    <property type="entry name" value="UDP-N-ACETYLMURAMOYLALANINE--D-GLUTAMATE LIGASE"/>
    <property type="match status" value="1"/>
</dbReference>
<dbReference type="PANTHER" id="PTHR43692:SF1">
    <property type="entry name" value="UDP-N-ACETYLMURAMOYLALANINE--D-GLUTAMATE LIGASE"/>
    <property type="match status" value="1"/>
</dbReference>
<dbReference type="Pfam" id="PF02875">
    <property type="entry name" value="Mur_ligase_C"/>
    <property type="match status" value="1"/>
</dbReference>
<dbReference type="Pfam" id="PF08245">
    <property type="entry name" value="Mur_ligase_M"/>
    <property type="match status" value="1"/>
</dbReference>
<dbReference type="Pfam" id="PF21799">
    <property type="entry name" value="MurD-like_N"/>
    <property type="match status" value="1"/>
</dbReference>
<dbReference type="SUPFAM" id="SSF51984">
    <property type="entry name" value="MurCD N-terminal domain"/>
    <property type="match status" value="1"/>
</dbReference>
<dbReference type="SUPFAM" id="SSF53623">
    <property type="entry name" value="MurD-like peptide ligases, catalytic domain"/>
    <property type="match status" value="1"/>
</dbReference>
<dbReference type="SUPFAM" id="SSF53244">
    <property type="entry name" value="MurD-like peptide ligases, peptide-binding domain"/>
    <property type="match status" value="1"/>
</dbReference>
<keyword id="KW-0067">ATP-binding</keyword>
<keyword id="KW-0131">Cell cycle</keyword>
<keyword id="KW-0132">Cell division</keyword>
<keyword id="KW-0133">Cell shape</keyword>
<keyword id="KW-0961">Cell wall biogenesis/degradation</keyword>
<keyword id="KW-0963">Cytoplasm</keyword>
<keyword id="KW-0436">Ligase</keyword>
<keyword id="KW-0547">Nucleotide-binding</keyword>
<keyword id="KW-0573">Peptidoglycan synthesis</keyword>
<keyword id="KW-1185">Reference proteome</keyword>
<accession>A5N4L3</accession>
<feature type="chain" id="PRO_1000082679" description="UDP-N-acetylmuramoylalanine--D-glutamate ligase">
    <location>
        <begin position="1"/>
        <end position="458"/>
    </location>
</feature>
<feature type="binding site" evidence="1">
    <location>
        <begin position="124"/>
        <end position="130"/>
    </location>
    <ligand>
        <name>ATP</name>
        <dbReference type="ChEBI" id="CHEBI:30616"/>
    </ligand>
</feature>
<organism>
    <name type="scientific">Clostridium kluyveri (strain ATCC 8527 / DSM 555 / NBRC 12016 / NCIMB 10680 / K1)</name>
    <dbReference type="NCBI Taxonomy" id="431943"/>
    <lineage>
        <taxon>Bacteria</taxon>
        <taxon>Bacillati</taxon>
        <taxon>Bacillota</taxon>
        <taxon>Clostridia</taxon>
        <taxon>Eubacteriales</taxon>
        <taxon>Clostridiaceae</taxon>
        <taxon>Clostridium</taxon>
    </lineage>
</organism>
<comment type="function">
    <text evidence="1">Cell wall formation. Catalyzes the addition of glutamate to the nucleotide precursor UDP-N-acetylmuramoyl-L-alanine (UMA).</text>
</comment>
<comment type="catalytic activity">
    <reaction evidence="1">
        <text>UDP-N-acetyl-alpha-D-muramoyl-L-alanine + D-glutamate + ATP = UDP-N-acetyl-alpha-D-muramoyl-L-alanyl-D-glutamate + ADP + phosphate + H(+)</text>
        <dbReference type="Rhea" id="RHEA:16429"/>
        <dbReference type="ChEBI" id="CHEBI:15378"/>
        <dbReference type="ChEBI" id="CHEBI:29986"/>
        <dbReference type="ChEBI" id="CHEBI:30616"/>
        <dbReference type="ChEBI" id="CHEBI:43474"/>
        <dbReference type="ChEBI" id="CHEBI:83898"/>
        <dbReference type="ChEBI" id="CHEBI:83900"/>
        <dbReference type="ChEBI" id="CHEBI:456216"/>
        <dbReference type="EC" id="6.3.2.9"/>
    </reaction>
</comment>
<comment type="pathway">
    <text evidence="1">Cell wall biogenesis; peptidoglycan biosynthesis.</text>
</comment>
<comment type="subcellular location">
    <subcellularLocation>
        <location evidence="1">Cytoplasm</location>
    </subcellularLocation>
</comment>
<comment type="similarity">
    <text evidence="1">Belongs to the MurCDEF family.</text>
</comment>
<sequence>MKRNFDDFKQFIKCKKIGVVGIGISNKPLIDFLLKLGARVSAFDKKSPDEIGEVARELKEKNVDLVLGEKYLNDLSDFDIIFKTPSMRIDSPAFVKAKEKGAYITSEMEEFIRYCPAKIYGVTGSDGKTTTTTLMYNILKKQGYKSWIGGNIGTPLFSEVEEITPDDRVVIELSSFQLMTMNISPEVAVITNVSPNHLDIHKDMEEYIMAKKNIFKYQSNSDLLVLNKDNELTNSMTGEALGKVRQFSIKEKLNKGGYLNKDSLCIDGDEVCKLSEIKLKGMHNVENLLAAFCALKDDVNIESMREIATTFSGVEHRCEFVREINGVKYYNDSIASSPTRTLAGLKAFEKPVILIAGGYDKKIPFDILAEEGYSKIKTLVLMGATKYKIKEAFENLELKKHVHIPIIMANSLVEAVNSARKVSCRGDVVTLSPACASFDMFANFEIRGNMFKEIVNDM</sequence>
<protein>
    <recommendedName>
        <fullName evidence="1">UDP-N-acetylmuramoylalanine--D-glutamate ligase</fullName>
        <ecNumber evidence="1">6.3.2.9</ecNumber>
    </recommendedName>
    <alternativeName>
        <fullName evidence="1">D-glutamic acid-adding enzyme</fullName>
    </alternativeName>
    <alternativeName>
        <fullName evidence="1">UDP-N-acetylmuramoyl-L-alanyl-D-glutamate synthetase</fullName>
    </alternativeName>
</protein>
<evidence type="ECO:0000255" key="1">
    <source>
        <dbReference type="HAMAP-Rule" id="MF_00639"/>
    </source>
</evidence>
<proteinExistence type="inferred from homology"/>
<reference key="1">
    <citation type="journal article" date="2008" name="Proc. Natl. Acad. Sci. U.S.A.">
        <title>The genome of Clostridium kluyveri, a strict anaerobe with unique metabolic features.</title>
        <authorList>
            <person name="Seedorf H."/>
            <person name="Fricke W.F."/>
            <person name="Veith B."/>
            <person name="Brueggemann H."/>
            <person name="Liesegang H."/>
            <person name="Strittmatter A."/>
            <person name="Miethke M."/>
            <person name="Buckel W."/>
            <person name="Hinderberger J."/>
            <person name="Li F."/>
            <person name="Hagemeier C."/>
            <person name="Thauer R.K."/>
            <person name="Gottschalk G."/>
        </authorList>
    </citation>
    <scope>NUCLEOTIDE SEQUENCE [LARGE SCALE GENOMIC DNA]</scope>
    <source>
        <strain>ATCC 8527 / DSM 555 / NBRC 12016 / NCIMB 10680 / K1</strain>
    </source>
</reference>
<name>MURD_CLOK5</name>
<gene>
    <name evidence="1" type="primary">murD</name>
    <name type="ordered locus">CKL_0181</name>
</gene>